<name>DHA_BILWA</name>
<organism>
    <name type="scientific">Bilophila wadsworthia</name>
    <dbReference type="NCBI Taxonomy" id="35833"/>
    <lineage>
        <taxon>Bacteria</taxon>
        <taxon>Pseudomonadati</taxon>
        <taxon>Thermodesulfobacteriota</taxon>
        <taxon>Desulfovibrionia</taxon>
        <taxon>Desulfovibrionales</taxon>
        <taxon>Desulfovibrionaceae</taxon>
        <taxon>Bilophila</taxon>
    </lineage>
</organism>
<reference key="1">
    <citation type="journal article" date="2000" name="Arch. Microbiol.">
        <title>Purification, properties and primary structure of alanine dehydrogenase involved in taurine metabolism in the anaerobe Bilophila wadsworthia.</title>
        <authorList>
            <person name="Laue H."/>
            <person name="Cook A.M."/>
        </authorList>
    </citation>
    <scope>NUCLEOTIDE SEQUENCE [GENOMIC DNA]</scope>
    <scope>PROTEIN SEQUENCE OF 1-15</scope>
    <scope>FUNCTION</scope>
    <scope>CATALYTIC ACTIVITY</scope>
    <scope>BIOPHYSICOCHEMICAL PROPERTIES</scope>
    <scope>SUBSTRATE SPECIFICITY</scope>
    <scope>INDUCTION</scope>
    <scope>SUBUNIT</scope>
    <scope>PATHWAY</scope>
    <source>
        <strain>DSM 11045 / RZATAU</strain>
    </source>
</reference>
<gene>
    <name evidence="5" type="primary">ald</name>
</gene>
<proteinExistence type="evidence at protein level"/>
<evidence type="ECO:0000255" key="1">
    <source>
        <dbReference type="PIRSR" id="PIRSR000183-1"/>
    </source>
</evidence>
<evidence type="ECO:0000255" key="2">
    <source>
        <dbReference type="PIRSR" id="PIRSR000183-2"/>
    </source>
</evidence>
<evidence type="ECO:0000255" key="3">
    <source>
        <dbReference type="PIRSR" id="PIRSR000183-3"/>
    </source>
</evidence>
<evidence type="ECO:0000269" key="4">
    <source>
    </source>
</evidence>
<evidence type="ECO:0000303" key="5">
    <source>
    </source>
</evidence>
<evidence type="ECO:0000305" key="6"/>
<evidence type="ECO:0000305" key="7">
    <source>
    </source>
</evidence>
<keyword id="KW-0903">Direct protein sequencing</keyword>
<keyword id="KW-0520">NAD</keyword>
<keyword id="KW-0547">Nucleotide-binding</keyword>
<keyword id="KW-0560">Oxidoreductase</keyword>
<sequence length="377" mass="39853">MRVGIPTEIKVQEFRVGITPAGVHALKEAGHTVLVQKGAGLGSMITDEEYVAAGAQMVATAKECWDCDMVVKVKEPLAPEYDLFHEGLILYTYLHLAPEPALTKALLEKKVIGIAYETVQFDNGFLPLLAPMSEVAGRMATQVGAQMLTKIEGGMGLLMGGTAGVQAAHVVILGAGTVGLSAAKVAMGMGARVTILDSNLFRLRQIDDLFGGRIQTLASNAFNIAAATKDADLLVGSVLIPGALTPKLVTEAMVKTMKPGSAIVDVAIDQGGCIEPTAKHGATYHDKPTFKYPVNGGEVVCYSVGNMPGAVARTSTFTLTNATMPYMVDLANKGWKKACQDDKALARGINTYDGKVYFKGVSDALGYELHCTCDILK</sequence>
<feature type="chain" id="PRO_0000450951" description="Alanine dehydrogenase">
    <location>
        <begin position="1"/>
        <end position="377"/>
    </location>
</feature>
<feature type="active site" description="Proton donor/acceptor" evidence="1">
    <location>
        <position position="95"/>
    </location>
</feature>
<feature type="active site" description="Proton donor/acceptor" evidence="1">
    <location>
        <position position="269"/>
    </location>
</feature>
<feature type="binding site" evidence="2">
    <location>
        <position position="15"/>
    </location>
    <ligand>
        <name>substrate</name>
    </ligand>
</feature>
<feature type="binding site" evidence="2">
    <location>
        <position position="74"/>
    </location>
    <ligand>
        <name>substrate</name>
    </ligand>
</feature>
<feature type="binding site" evidence="3">
    <location>
        <position position="133"/>
    </location>
    <ligand>
        <name>NAD(+)</name>
        <dbReference type="ChEBI" id="CHEBI:57540"/>
    </ligand>
</feature>
<feature type="binding site" evidence="3">
    <location>
        <position position="197"/>
    </location>
    <ligand>
        <name>NAD(+)</name>
        <dbReference type="ChEBI" id="CHEBI:57540"/>
    </ligand>
</feature>
<feature type="binding site" evidence="3">
    <location>
        <position position="202"/>
    </location>
    <ligand>
        <name>NAD(+)</name>
        <dbReference type="ChEBI" id="CHEBI:57540"/>
    </ligand>
</feature>
<feature type="binding site" evidence="3">
    <location>
        <position position="219"/>
    </location>
    <ligand>
        <name>NAD(+)</name>
        <dbReference type="ChEBI" id="CHEBI:57540"/>
    </ligand>
</feature>
<feature type="binding site" evidence="3">
    <location>
        <begin position="238"/>
        <end position="239"/>
    </location>
    <ligand>
        <name>NAD(+)</name>
        <dbReference type="ChEBI" id="CHEBI:57540"/>
    </ligand>
</feature>
<feature type="binding site" evidence="3">
    <location>
        <begin position="266"/>
        <end position="269"/>
    </location>
    <ligand>
        <name>NAD(+)</name>
        <dbReference type="ChEBI" id="CHEBI:57540"/>
    </ligand>
</feature>
<feature type="binding site" evidence="3">
    <location>
        <begin position="304"/>
        <end position="307"/>
    </location>
    <ligand>
        <name>NAD(+)</name>
        <dbReference type="ChEBI" id="CHEBI:57540"/>
    </ligand>
</feature>
<protein>
    <recommendedName>
        <fullName evidence="5">Alanine dehydrogenase</fullName>
        <ecNumber evidence="4">1.4.1.1</ecNumber>
    </recommendedName>
</protein>
<accession>Q9AIK2</accession>
<dbReference type="EC" id="1.4.1.1" evidence="4"/>
<dbReference type="EMBL" id="AF269148">
    <property type="protein sequence ID" value="AAK38118.1"/>
    <property type="molecule type" value="Genomic_DNA"/>
</dbReference>
<dbReference type="RefSeq" id="WP_005028751.1">
    <property type="nucleotide sequence ID" value="NZ_JBGKTC010000004.1"/>
</dbReference>
<dbReference type="SMR" id="Q9AIK2"/>
<dbReference type="GeneID" id="78084893"/>
<dbReference type="BioCyc" id="MetaCyc:MONOMER-12510"/>
<dbReference type="BRENDA" id="1.4.1.1">
    <property type="organism ID" value="856"/>
</dbReference>
<dbReference type="UniPathway" id="UPA00338"/>
<dbReference type="GO" id="GO:0005886">
    <property type="term" value="C:plasma membrane"/>
    <property type="evidence" value="ECO:0007669"/>
    <property type="project" value="TreeGrafter"/>
</dbReference>
<dbReference type="GO" id="GO:0000286">
    <property type="term" value="F:alanine dehydrogenase activity"/>
    <property type="evidence" value="ECO:0007669"/>
    <property type="project" value="UniProtKB-EC"/>
</dbReference>
<dbReference type="GO" id="GO:0000166">
    <property type="term" value="F:nucleotide binding"/>
    <property type="evidence" value="ECO:0007669"/>
    <property type="project" value="UniProtKB-KW"/>
</dbReference>
<dbReference type="GO" id="GO:0046306">
    <property type="term" value="P:alkanesulfonate catabolic process"/>
    <property type="evidence" value="ECO:0007669"/>
    <property type="project" value="UniProtKB-UniPathway"/>
</dbReference>
<dbReference type="GO" id="GO:0042853">
    <property type="term" value="P:L-alanine catabolic process"/>
    <property type="evidence" value="ECO:0007669"/>
    <property type="project" value="InterPro"/>
</dbReference>
<dbReference type="CDD" id="cd05305">
    <property type="entry name" value="L-AlaDH"/>
    <property type="match status" value="1"/>
</dbReference>
<dbReference type="FunFam" id="3.40.50.720:FF:000049">
    <property type="entry name" value="Alanine dehydrogenase"/>
    <property type="match status" value="1"/>
</dbReference>
<dbReference type="Gene3D" id="3.40.50.720">
    <property type="entry name" value="NAD(P)-binding Rossmann-like Domain"/>
    <property type="match status" value="2"/>
</dbReference>
<dbReference type="InterPro" id="IPR008141">
    <property type="entry name" value="Ala_DH"/>
</dbReference>
<dbReference type="InterPro" id="IPR008143">
    <property type="entry name" value="Ala_DH/PNT_CS2"/>
</dbReference>
<dbReference type="InterPro" id="IPR007886">
    <property type="entry name" value="AlaDH/PNT_N"/>
</dbReference>
<dbReference type="InterPro" id="IPR007698">
    <property type="entry name" value="AlaDH/PNT_NAD(H)-bd"/>
</dbReference>
<dbReference type="InterPro" id="IPR036291">
    <property type="entry name" value="NAD(P)-bd_dom_sf"/>
</dbReference>
<dbReference type="NCBIfam" id="TIGR00518">
    <property type="entry name" value="alaDH"/>
    <property type="match status" value="1"/>
</dbReference>
<dbReference type="PANTHER" id="PTHR42795">
    <property type="entry name" value="ALANINE DEHYDROGENASE"/>
    <property type="match status" value="1"/>
</dbReference>
<dbReference type="PANTHER" id="PTHR42795:SF1">
    <property type="entry name" value="ALANINE DEHYDROGENASE"/>
    <property type="match status" value="1"/>
</dbReference>
<dbReference type="Pfam" id="PF01262">
    <property type="entry name" value="AlaDh_PNT_C"/>
    <property type="match status" value="1"/>
</dbReference>
<dbReference type="Pfam" id="PF05222">
    <property type="entry name" value="AlaDh_PNT_N"/>
    <property type="match status" value="1"/>
</dbReference>
<dbReference type="PIRSF" id="PIRSF000183">
    <property type="entry name" value="Alanine_dh"/>
    <property type="match status" value="1"/>
</dbReference>
<dbReference type="SMART" id="SM01002">
    <property type="entry name" value="AlaDh_PNT_C"/>
    <property type="match status" value="1"/>
</dbReference>
<dbReference type="SMART" id="SM01003">
    <property type="entry name" value="AlaDh_PNT_N"/>
    <property type="match status" value="1"/>
</dbReference>
<dbReference type="SUPFAM" id="SSF52283">
    <property type="entry name" value="Formate/glycerate dehydrogenase catalytic domain-like"/>
    <property type="match status" value="1"/>
</dbReference>
<dbReference type="SUPFAM" id="SSF51735">
    <property type="entry name" value="NAD(P)-binding Rossmann-fold domains"/>
    <property type="match status" value="1"/>
</dbReference>
<dbReference type="PROSITE" id="PS00837">
    <property type="entry name" value="ALADH_PNT_2"/>
    <property type="match status" value="1"/>
</dbReference>
<comment type="function">
    <text evidence="4">Involved in an anaerobic respiration pathway that converts the sulfonate taurine (2-aminoethanesulfonate) to ammonia, acetate and sulfide. Catalyzes the oxidative deamination of alanine which regenerates pyruvate, the amino group acceptor for the taurine--pyruvate aminotransferase enzyme, and liberates ammonia. Can also catalyze the reverse reaction in vitro. Cannot use NADP(H)(+) as a substrate. To a lesser extent, is also able to deaminate L-2-aminobutyrate in vitro, and in the amination reaction the enzyme can utilize oxaloacetate and 2-oxobutyrate in addition to pyruvate.</text>
</comment>
<comment type="catalytic activity">
    <reaction evidence="4">
        <text>L-alanine + NAD(+) + H2O = pyruvate + NH4(+) + NADH + H(+)</text>
        <dbReference type="Rhea" id="RHEA:18405"/>
        <dbReference type="ChEBI" id="CHEBI:15361"/>
        <dbReference type="ChEBI" id="CHEBI:15377"/>
        <dbReference type="ChEBI" id="CHEBI:15378"/>
        <dbReference type="ChEBI" id="CHEBI:28938"/>
        <dbReference type="ChEBI" id="CHEBI:57540"/>
        <dbReference type="ChEBI" id="CHEBI:57945"/>
        <dbReference type="ChEBI" id="CHEBI:57972"/>
        <dbReference type="EC" id="1.4.1.1"/>
    </reaction>
    <physiologicalReaction direction="left-to-right" evidence="7">
        <dbReference type="Rhea" id="RHEA:18406"/>
    </physiologicalReaction>
</comment>
<comment type="biophysicochemical properties">
    <kinetics>
        <KM evidence="4">1.6 mM for L-alanine (at pH 10 and 35 degrees Celsius)</KM>
        <KM evidence="4">0.15 mM for NAD(+) (at pH 10 and 35 degrees Celsius)</KM>
        <KM evidence="4">1.1 mM for pyruvate (at pH 9 and 35 degrees Celsius)</KM>
        <KM evidence="4">31 mM for ammonia (at pH 9 and 35 degrees Celsius)</KM>
        <KM evidence="4">0.04 mM for NADH (at pH 9 and 35 degrees Celsius)</KM>
        <Vmax evidence="4">17.0 umol/sec/mg enzyme for the reductive amination of pyruvate</Vmax>
        <Vmax evidence="4">1.2 umol/sec/mg enzyme for the oxidative deamination of alanine</Vmax>
    </kinetics>
    <phDependence>
        <text evidence="4">Optimum pH is 9.0 for reductive amination of pyruvate and pH 9.0-11.5 for oxidative deamination of alanine.</text>
    </phDependence>
    <temperatureDependence>
        <text evidence="4">Optimum temperature is 55-60 degrees Celsius for reductive amination and 50-55 degrees Celsius for oxidative deamination. But at 60 degrees Celsius an inactivation of the enzyme is observed after about 1 minute, while at 65 degrees Celsius the enzyme is inactive after about 10 seconds.</text>
    </temperatureDependence>
</comment>
<comment type="pathway">
    <text evidence="7">Organosulfur degradation; alkanesulfonate degradation.</text>
</comment>
<comment type="subunit">
    <text evidence="4">Homohexamer.</text>
</comment>
<comment type="induction">
    <text evidence="4">Up-regulated in the presence of taurine.</text>
</comment>
<comment type="miscellaneous">
    <text evidence="6">Taurine is an abundant dietary and host-derived molecule whose metabolism to hydrogen sulfide (H2S) by members of the human gut microbiota has many prominent connections to host health and disease. The human gut bacterium and opportunistic pathogen Bilophila wadsworthia produces H2S when respiring sulfite (HSO3-) released from organosulfonate substrates such as taurine and isethionate.</text>
</comment>
<comment type="similarity">
    <text evidence="6">Belongs to the AlaDH/PNT family.</text>
</comment>